<gene>
    <name evidence="1" type="primary">rplB</name>
    <name type="ordered locus">ASA_4084</name>
</gene>
<name>RL2_AERS4</name>
<reference key="1">
    <citation type="journal article" date="2008" name="BMC Genomics">
        <title>The genome of Aeromonas salmonicida subsp. salmonicida A449: insights into the evolution of a fish pathogen.</title>
        <authorList>
            <person name="Reith M.E."/>
            <person name="Singh R.K."/>
            <person name="Curtis B."/>
            <person name="Boyd J.M."/>
            <person name="Bouevitch A."/>
            <person name="Kimball J."/>
            <person name="Munholland J."/>
            <person name="Murphy C."/>
            <person name="Sarty D."/>
            <person name="Williams J."/>
            <person name="Nash J.H."/>
            <person name="Johnson S.C."/>
            <person name="Brown L.L."/>
        </authorList>
    </citation>
    <scope>NUCLEOTIDE SEQUENCE [LARGE SCALE GENOMIC DNA]</scope>
    <source>
        <strain>A449</strain>
    </source>
</reference>
<protein>
    <recommendedName>
        <fullName evidence="1">Large ribosomal subunit protein uL2</fullName>
    </recommendedName>
    <alternativeName>
        <fullName evidence="3">50S ribosomal protein L2</fullName>
    </alternativeName>
</protein>
<organism>
    <name type="scientific">Aeromonas salmonicida (strain A449)</name>
    <dbReference type="NCBI Taxonomy" id="382245"/>
    <lineage>
        <taxon>Bacteria</taxon>
        <taxon>Pseudomonadati</taxon>
        <taxon>Pseudomonadota</taxon>
        <taxon>Gammaproteobacteria</taxon>
        <taxon>Aeromonadales</taxon>
        <taxon>Aeromonadaceae</taxon>
        <taxon>Aeromonas</taxon>
    </lineage>
</organism>
<comment type="function">
    <text evidence="1">One of the primary rRNA binding proteins. Required for association of the 30S and 50S subunits to form the 70S ribosome, for tRNA binding and peptide bond formation. It has been suggested to have peptidyltransferase activity; this is somewhat controversial. Makes several contacts with the 16S rRNA in the 70S ribosome.</text>
</comment>
<comment type="subunit">
    <text evidence="1">Part of the 50S ribosomal subunit. Forms a bridge to the 30S subunit in the 70S ribosome.</text>
</comment>
<comment type="similarity">
    <text evidence="1">Belongs to the universal ribosomal protein uL2 family.</text>
</comment>
<feature type="chain" id="PRO_0000309864" description="Large ribosomal subunit protein uL2">
    <location>
        <begin position="1"/>
        <end position="273"/>
    </location>
</feature>
<feature type="region of interest" description="Disordered" evidence="2">
    <location>
        <begin position="35"/>
        <end position="54"/>
    </location>
</feature>
<feature type="region of interest" description="Disordered" evidence="2">
    <location>
        <begin position="222"/>
        <end position="273"/>
    </location>
</feature>
<feature type="compositionally biased region" description="Polar residues" evidence="2">
    <location>
        <begin position="39"/>
        <end position="49"/>
    </location>
</feature>
<feature type="compositionally biased region" description="Basic and acidic residues" evidence="2">
    <location>
        <begin position="229"/>
        <end position="239"/>
    </location>
</feature>
<feature type="compositionally biased region" description="Basic residues" evidence="2">
    <location>
        <begin position="253"/>
        <end position="273"/>
    </location>
</feature>
<sequence length="273" mass="29993">MAIVKCKPTSPGRRHVVKIVNQELYKGKPFAALLDSKSKSGGRNNNGRITTRHIGGGHKQHYRIVDFKRDKDGIPAKVERLEYDPNRTANIALVLYADGERRYILAPKGLKAGDAIASGADAAIKVGNTLPMRNIPVGSTVHAVEMKPGKGAQLARSAGTFIQILAREGNYVTLRLRSGEVRKVLAECRATIGEVGNSEHMLRQLGKAGANRWRGIRPTVRGMAMNPVDHPHGGGEGRNKGMQPVSPWGQKAKGFKTRKNKRTDKYIVRRRNK</sequence>
<accession>A4ST03</accession>
<keyword id="KW-0687">Ribonucleoprotein</keyword>
<keyword id="KW-0689">Ribosomal protein</keyword>
<keyword id="KW-0694">RNA-binding</keyword>
<keyword id="KW-0699">rRNA-binding</keyword>
<proteinExistence type="inferred from homology"/>
<dbReference type="EMBL" id="CP000644">
    <property type="protein sequence ID" value="ABO92025.1"/>
    <property type="molecule type" value="Genomic_DNA"/>
</dbReference>
<dbReference type="RefSeq" id="WP_005319743.1">
    <property type="nucleotide sequence ID" value="NC_009348.1"/>
</dbReference>
<dbReference type="SMR" id="A4ST03"/>
<dbReference type="STRING" id="29491.GCA_000820065_03468"/>
<dbReference type="GeneID" id="92721501"/>
<dbReference type="KEGG" id="asa:ASA_4084"/>
<dbReference type="eggNOG" id="COG0090">
    <property type="taxonomic scope" value="Bacteria"/>
</dbReference>
<dbReference type="HOGENOM" id="CLU_036235_2_1_6"/>
<dbReference type="Proteomes" id="UP000000225">
    <property type="component" value="Chromosome"/>
</dbReference>
<dbReference type="GO" id="GO:0015934">
    <property type="term" value="C:large ribosomal subunit"/>
    <property type="evidence" value="ECO:0007669"/>
    <property type="project" value="InterPro"/>
</dbReference>
<dbReference type="GO" id="GO:0019843">
    <property type="term" value="F:rRNA binding"/>
    <property type="evidence" value="ECO:0007669"/>
    <property type="project" value="UniProtKB-UniRule"/>
</dbReference>
<dbReference type="GO" id="GO:0003735">
    <property type="term" value="F:structural constituent of ribosome"/>
    <property type="evidence" value="ECO:0007669"/>
    <property type="project" value="InterPro"/>
</dbReference>
<dbReference type="GO" id="GO:0016740">
    <property type="term" value="F:transferase activity"/>
    <property type="evidence" value="ECO:0007669"/>
    <property type="project" value="InterPro"/>
</dbReference>
<dbReference type="GO" id="GO:0002181">
    <property type="term" value="P:cytoplasmic translation"/>
    <property type="evidence" value="ECO:0007669"/>
    <property type="project" value="TreeGrafter"/>
</dbReference>
<dbReference type="FunFam" id="2.30.30.30:FF:000001">
    <property type="entry name" value="50S ribosomal protein L2"/>
    <property type="match status" value="1"/>
</dbReference>
<dbReference type="FunFam" id="2.40.50.140:FF:000003">
    <property type="entry name" value="50S ribosomal protein L2"/>
    <property type="match status" value="1"/>
</dbReference>
<dbReference type="FunFam" id="4.10.950.10:FF:000001">
    <property type="entry name" value="50S ribosomal protein L2"/>
    <property type="match status" value="1"/>
</dbReference>
<dbReference type="Gene3D" id="2.30.30.30">
    <property type="match status" value="1"/>
</dbReference>
<dbReference type="Gene3D" id="2.40.50.140">
    <property type="entry name" value="Nucleic acid-binding proteins"/>
    <property type="match status" value="1"/>
</dbReference>
<dbReference type="Gene3D" id="4.10.950.10">
    <property type="entry name" value="Ribosomal protein L2, domain 3"/>
    <property type="match status" value="1"/>
</dbReference>
<dbReference type="HAMAP" id="MF_01320_B">
    <property type="entry name" value="Ribosomal_uL2_B"/>
    <property type="match status" value="1"/>
</dbReference>
<dbReference type="InterPro" id="IPR012340">
    <property type="entry name" value="NA-bd_OB-fold"/>
</dbReference>
<dbReference type="InterPro" id="IPR014722">
    <property type="entry name" value="Rib_uL2_dom2"/>
</dbReference>
<dbReference type="InterPro" id="IPR002171">
    <property type="entry name" value="Ribosomal_uL2"/>
</dbReference>
<dbReference type="InterPro" id="IPR005880">
    <property type="entry name" value="Ribosomal_uL2_bac/org-type"/>
</dbReference>
<dbReference type="InterPro" id="IPR022669">
    <property type="entry name" value="Ribosomal_uL2_C"/>
</dbReference>
<dbReference type="InterPro" id="IPR014726">
    <property type="entry name" value="Ribosomal_uL2_dom3"/>
</dbReference>
<dbReference type="InterPro" id="IPR022666">
    <property type="entry name" value="Ribosomal_uL2_RNA-bd_dom"/>
</dbReference>
<dbReference type="InterPro" id="IPR008991">
    <property type="entry name" value="Translation_prot_SH3-like_sf"/>
</dbReference>
<dbReference type="NCBIfam" id="TIGR01171">
    <property type="entry name" value="rplB_bact"/>
    <property type="match status" value="1"/>
</dbReference>
<dbReference type="PANTHER" id="PTHR13691:SF5">
    <property type="entry name" value="LARGE RIBOSOMAL SUBUNIT PROTEIN UL2M"/>
    <property type="match status" value="1"/>
</dbReference>
<dbReference type="PANTHER" id="PTHR13691">
    <property type="entry name" value="RIBOSOMAL PROTEIN L2"/>
    <property type="match status" value="1"/>
</dbReference>
<dbReference type="Pfam" id="PF00181">
    <property type="entry name" value="Ribosomal_L2"/>
    <property type="match status" value="1"/>
</dbReference>
<dbReference type="Pfam" id="PF03947">
    <property type="entry name" value="Ribosomal_L2_C"/>
    <property type="match status" value="1"/>
</dbReference>
<dbReference type="PIRSF" id="PIRSF002158">
    <property type="entry name" value="Ribosomal_L2"/>
    <property type="match status" value="1"/>
</dbReference>
<dbReference type="SMART" id="SM01383">
    <property type="entry name" value="Ribosomal_L2"/>
    <property type="match status" value="1"/>
</dbReference>
<dbReference type="SMART" id="SM01382">
    <property type="entry name" value="Ribosomal_L2_C"/>
    <property type="match status" value="1"/>
</dbReference>
<dbReference type="SUPFAM" id="SSF50249">
    <property type="entry name" value="Nucleic acid-binding proteins"/>
    <property type="match status" value="1"/>
</dbReference>
<dbReference type="SUPFAM" id="SSF50104">
    <property type="entry name" value="Translation proteins SH3-like domain"/>
    <property type="match status" value="1"/>
</dbReference>
<evidence type="ECO:0000255" key="1">
    <source>
        <dbReference type="HAMAP-Rule" id="MF_01320"/>
    </source>
</evidence>
<evidence type="ECO:0000256" key="2">
    <source>
        <dbReference type="SAM" id="MobiDB-lite"/>
    </source>
</evidence>
<evidence type="ECO:0000305" key="3"/>